<protein>
    <recommendedName>
        <fullName evidence="2">Large ribosomal subunit protein bL27</fullName>
    </recommendedName>
    <alternativeName>
        <fullName evidence="3">50S ribosomal protein L27</fullName>
    </alternativeName>
</protein>
<comment type="PTM">
    <text evidence="1">The N-terminus is cleaved by ribosomal processing cysteine protease Prp.</text>
</comment>
<comment type="similarity">
    <text evidence="2">Belongs to the bacterial ribosomal protein bL27 family.</text>
</comment>
<keyword id="KW-0687">Ribonucleoprotein</keyword>
<keyword id="KW-0689">Ribosomal protein</keyword>
<name>RL27_CLOB6</name>
<reference key="1">
    <citation type="submission" date="2008-05" db="EMBL/GenBank/DDBJ databases">
        <title>Genome sequence of Clostridium botulinum Ba4 strain 657.</title>
        <authorList>
            <person name="Shrivastava S."/>
            <person name="Brown J.L."/>
            <person name="Bruce D."/>
            <person name="Detter C."/>
            <person name="Munk C."/>
            <person name="Smith L.A."/>
            <person name="Smith T.J."/>
            <person name="Sutton G."/>
            <person name="Brettin T.S."/>
        </authorList>
    </citation>
    <scope>NUCLEOTIDE SEQUENCE [LARGE SCALE GENOMIC DNA]</scope>
    <source>
        <strain>657 / Type Ba4</strain>
    </source>
</reference>
<gene>
    <name evidence="2" type="primary">rpmA</name>
    <name type="ordered locus">CLJ_B3244</name>
</gene>
<sequence>MLVMNLQLFAHKKGVGSSKNGRDSEAKRLGVKCSDGQFVLAGNILVRQRGTKIHPGLNVGRGGDDTLFAKIDGVVKYERLGRDKKKASVYPVEVEKVVAE</sequence>
<feature type="propeptide" id="PRO_0000459871" evidence="1">
    <location>
        <begin position="1"/>
        <end position="9"/>
    </location>
</feature>
<feature type="chain" id="PRO_1000211919" description="Large ribosomal subunit protein bL27">
    <location>
        <begin position="10"/>
        <end position="100"/>
    </location>
</feature>
<dbReference type="EMBL" id="CP001083">
    <property type="protein sequence ID" value="ACQ52099.1"/>
    <property type="molecule type" value="Genomic_DNA"/>
</dbReference>
<dbReference type="RefSeq" id="WP_003360015.1">
    <property type="nucleotide sequence ID" value="NC_012658.1"/>
</dbReference>
<dbReference type="SMR" id="C3L3J4"/>
<dbReference type="KEGG" id="cbi:CLJ_B3244"/>
<dbReference type="HOGENOM" id="CLU_095424_4_0_9"/>
<dbReference type="Proteomes" id="UP000002333">
    <property type="component" value="Chromosome"/>
</dbReference>
<dbReference type="GO" id="GO:0022625">
    <property type="term" value="C:cytosolic large ribosomal subunit"/>
    <property type="evidence" value="ECO:0007669"/>
    <property type="project" value="TreeGrafter"/>
</dbReference>
<dbReference type="GO" id="GO:0003735">
    <property type="term" value="F:structural constituent of ribosome"/>
    <property type="evidence" value="ECO:0007669"/>
    <property type="project" value="InterPro"/>
</dbReference>
<dbReference type="GO" id="GO:0006412">
    <property type="term" value="P:translation"/>
    <property type="evidence" value="ECO:0007669"/>
    <property type="project" value="UniProtKB-UniRule"/>
</dbReference>
<dbReference type="FunFam" id="2.40.50.100:FF:000004">
    <property type="entry name" value="50S ribosomal protein L27"/>
    <property type="match status" value="1"/>
</dbReference>
<dbReference type="Gene3D" id="2.40.50.100">
    <property type="match status" value="1"/>
</dbReference>
<dbReference type="HAMAP" id="MF_00539">
    <property type="entry name" value="Ribosomal_bL27"/>
    <property type="match status" value="1"/>
</dbReference>
<dbReference type="InterPro" id="IPR001684">
    <property type="entry name" value="Ribosomal_bL27"/>
</dbReference>
<dbReference type="InterPro" id="IPR018261">
    <property type="entry name" value="Ribosomal_bL27_CS"/>
</dbReference>
<dbReference type="NCBIfam" id="TIGR00062">
    <property type="entry name" value="L27"/>
    <property type="match status" value="1"/>
</dbReference>
<dbReference type="PANTHER" id="PTHR15893:SF0">
    <property type="entry name" value="LARGE RIBOSOMAL SUBUNIT PROTEIN BL27M"/>
    <property type="match status" value="1"/>
</dbReference>
<dbReference type="PANTHER" id="PTHR15893">
    <property type="entry name" value="RIBOSOMAL PROTEIN L27"/>
    <property type="match status" value="1"/>
</dbReference>
<dbReference type="Pfam" id="PF01016">
    <property type="entry name" value="Ribosomal_L27"/>
    <property type="match status" value="1"/>
</dbReference>
<dbReference type="PRINTS" id="PR00063">
    <property type="entry name" value="RIBOSOMALL27"/>
</dbReference>
<dbReference type="SUPFAM" id="SSF110324">
    <property type="entry name" value="Ribosomal L27 protein-like"/>
    <property type="match status" value="1"/>
</dbReference>
<dbReference type="PROSITE" id="PS00831">
    <property type="entry name" value="RIBOSOMAL_L27"/>
    <property type="match status" value="1"/>
</dbReference>
<proteinExistence type="inferred from homology"/>
<evidence type="ECO:0000250" key="1">
    <source>
        <dbReference type="UniProtKB" id="Q2FXT0"/>
    </source>
</evidence>
<evidence type="ECO:0000255" key="2">
    <source>
        <dbReference type="HAMAP-Rule" id="MF_00539"/>
    </source>
</evidence>
<evidence type="ECO:0000305" key="3"/>
<accession>C3L3J4</accession>
<organism>
    <name type="scientific">Clostridium botulinum (strain 657 / Type Ba4)</name>
    <dbReference type="NCBI Taxonomy" id="515621"/>
    <lineage>
        <taxon>Bacteria</taxon>
        <taxon>Bacillati</taxon>
        <taxon>Bacillota</taxon>
        <taxon>Clostridia</taxon>
        <taxon>Eubacteriales</taxon>
        <taxon>Clostridiaceae</taxon>
        <taxon>Clostridium</taxon>
    </lineage>
</organism>